<sequence length="472" mass="53444">MAGPGWGPPRLDGFILTERLGSGTYATVYKAYAKKDTREVVAIKCVAKKSLNKASVENLLTEIEILKGIRHPHIVQLKDFQWDSDNIYLIMEFCAGGDLSRFIHTRRILPEKVARVFMQQLASALQFLHERNISHLDLKPQNILLSSLEKPHLKLADFGFAQHMSPWDEKHVLRGSPLYMAPEMVCQRQYDARVDLWSMGVILYEALFGQPPFASRSFSELEEKIRSNRVIELPLRPLLSRDCRDLLQRLLERDPSRRISFQDFFAHPWVDLEHMPSGESLGRATALVVQAVKKDQEGDSAAALSLYCKALDFFVPALHYEVDAQRKEAIKAKVGQYVSRAEELKAIVSSSNQALLRQGTSARDLLREMARDKPRLLAALEVASAAMAKEEAAGGEQDALDLYQHSLGELLLLLAAEPPGRRRELLHTEVQNLMARAEYLKEQVKMRESRWEADTLDKEGLSESVRSSCTLQ</sequence>
<evidence type="ECO:0000255" key="1">
    <source>
        <dbReference type="PROSITE-ProRule" id="PRU00159"/>
    </source>
</evidence>
<evidence type="ECO:0000255" key="2">
    <source>
        <dbReference type="PROSITE-ProRule" id="PRU10027"/>
    </source>
</evidence>
<evidence type="ECO:0000269" key="3">
    <source>
    </source>
</evidence>
<evidence type="ECO:0000269" key="4">
    <source>
    </source>
</evidence>
<evidence type="ECO:0000269" key="5">
    <source>
    </source>
</evidence>
<evidence type="ECO:0000303" key="6">
    <source>
    </source>
</evidence>
<evidence type="ECO:0000303" key="7">
    <source>
    </source>
</evidence>
<evidence type="ECO:0000303" key="8">
    <source>
    </source>
</evidence>
<evidence type="ECO:0000303" key="9">
    <source ref="6"/>
</evidence>
<evidence type="ECO:0000305" key="10"/>
<evidence type="ECO:0007744" key="11">
    <source>
    </source>
</evidence>
<evidence type="ECO:0007829" key="12">
    <source>
        <dbReference type="PDB" id="4WZX"/>
    </source>
</evidence>
<evidence type="ECO:0007829" key="13">
    <source>
        <dbReference type="PDB" id="6FDY"/>
    </source>
</evidence>
<evidence type="ECO:0007829" key="14">
    <source>
        <dbReference type="PDB" id="6FDZ"/>
    </source>
</evidence>
<name>ULK3_HUMAN</name>
<reference key="1">
    <citation type="journal article" date="2004" name="Nat. Genet.">
        <title>Complete sequencing and characterization of 21,243 full-length human cDNAs.</title>
        <authorList>
            <person name="Ota T."/>
            <person name="Suzuki Y."/>
            <person name="Nishikawa T."/>
            <person name="Otsuki T."/>
            <person name="Sugiyama T."/>
            <person name="Irie R."/>
            <person name="Wakamatsu A."/>
            <person name="Hayashi K."/>
            <person name="Sato H."/>
            <person name="Nagai K."/>
            <person name="Kimura K."/>
            <person name="Makita H."/>
            <person name="Sekine M."/>
            <person name="Obayashi M."/>
            <person name="Nishi T."/>
            <person name="Shibahara T."/>
            <person name="Tanaka T."/>
            <person name="Ishii S."/>
            <person name="Yamamoto J."/>
            <person name="Saito K."/>
            <person name="Kawai Y."/>
            <person name="Isono Y."/>
            <person name="Nakamura Y."/>
            <person name="Nagahari K."/>
            <person name="Murakami K."/>
            <person name="Yasuda T."/>
            <person name="Iwayanagi T."/>
            <person name="Wagatsuma M."/>
            <person name="Shiratori A."/>
            <person name="Sudo H."/>
            <person name="Hosoiri T."/>
            <person name="Kaku Y."/>
            <person name="Kodaira H."/>
            <person name="Kondo H."/>
            <person name="Sugawara M."/>
            <person name="Takahashi M."/>
            <person name="Kanda K."/>
            <person name="Yokoi T."/>
            <person name="Furuya T."/>
            <person name="Kikkawa E."/>
            <person name="Omura Y."/>
            <person name="Abe K."/>
            <person name="Kamihara K."/>
            <person name="Katsuta N."/>
            <person name="Sato K."/>
            <person name="Tanikawa M."/>
            <person name="Yamazaki M."/>
            <person name="Ninomiya K."/>
            <person name="Ishibashi T."/>
            <person name="Yamashita H."/>
            <person name="Murakawa K."/>
            <person name="Fujimori K."/>
            <person name="Tanai H."/>
            <person name="Kimata M."/>
            <person name="Watanabe M."/>
            <person name="Hiraoka S."/>
            <person name="Chiba Y."/>
            <person name="Ishida S."/>
            <person name="Ono Y."/>
            <person name="Takiguchi S."/>
            <person name="Watanabe S."/>
            <person name="Yosida M."/>
            <person name="Hotuta T."/>
            <person name="Kusano J."/>
            <person name="Kanehori K."/>
            <person name="Takahashi-Fujii A."/>
            <person name="Hara H."/>
            <person name="Tanase T.-O."/>
            <person name="Nomura Y."/>
            <person name="Togiya S."/>
            <person name="Komai F."/>
            <person name="Hara R."/>
            <person name="Takeuchi K."/>
            <person name="Arita M."/>
            <person name="Imose N."/>
            <person name="Musashino K."/>
            <person name="Yuuki H."/>
            <person name="Oshima A."/>
            <person name="Sasaki N."/>
            <person name="Aotsuka S."/>
            <person name="Yoshikawa Y."/>
            <person name="Matsunawa H."/>
            <person name="Ichihara T."/>
            <person name="Shiohata N."/>
            <person name="Sano S."/>
            <person name="Moriya S."/>
            <person name="Momiyama H."/>
            <person name="Satoh N."/>
            <person name="Takami S."/>
            <person name="Terashima Y."/>
            <person name="Suzuki O."/>
            <person name="Nakagawa S."/>
            <person name="Senoh A."/>
            <person name="Mizoguchi H."/>
            <person name="Goto Y."/>
            <person name="Shimizu F."/>
            <person name="Wakebe H."/>
            <person name="Hishigaki H."/>
            <person name="Watanabe T."/>
            <person name="Sugiyama A."/>
            <person name="Takemoto M."/>
            <person name="Kawakami B."/>
            <person name="Yamazaki M."/>
            <person name="Watanabe K."/>
            <person name="Kumagai A."/>
            <person name="Itakura S."/>
            <person name="Fukuzumi Y."/>
            <person name="Fujimori Y."/>
            <person name="Komiyama M."/>
            <person name="Tashiro H."/>
            <person name="Tanigami A."/>
            <person name="Fujiwara T."/>
            <person name="Ono T."/>
            <person name="Yamada K."/>
            <person name="Fujii Y."/>
            <person name="Ozaki K."/>
            <person name="Hirao M."/>
            <person name="Ohmori Y."/>
            <person name="Kawabata A."/>
            <person name="Hikiji T."/>
            <person name="Kobatake N."/>
            <person name="Inagaki H."/>
            <person name="Ikema Y."/>
            <person name="Okamoto S."/>
            <person name="Okitani R."/>
            <person name="Kawakami T."/>
            <person name="Noguchi S."/>
            <person name="Itoh T."/>
            <person name="Shigeta K."/>
            <person name="Senba T."/>
            <person name="Matsumura K."/>
            <person name="Nakajima Y."/>
            <person name="Mizuno T."/>
            <person name="Morinaga M."/>
            <person name="Sasaki M."/>
            <person name="Togashi T."/>
            <person name="Oyama M."/>
            <person name="Hata H."/>
            <person name="Watanabe M."/>
            <person name="Komatsu T."/>
            <person name="Mizushima-Sugano J."/>
            <person name="Satoh T."/>
            <person name="Shirai Y."/>
            <person name="Takahashi Y."/>
            <person name="Nakagawa K."/>
            <person name="Okumura K."/>
            <person name="Nagase T."/>
            <person name="Nomura N."/>
            <person name="Kikuchi H."/>
            <person name="Masuho Y."/>
            <person name="Yamashita R."/>
            <person name="Nakai K."/>
            <person name="Yada T."/>
            <person name="Nakamura Y."/>
            <person name="Ohara O."/>
            <person name="Isogai T."/>
            <person name="Sugano S."/>
        </authorList>
    </citation>
    <scope>NUCLEOTIDE SEQUENCE [LARGE SCALE MRNA] (ISOFORMS 1 AND 4)</scope>
    <source>
        <tissue>Amygdala</tissue>
        <tissue>Tongue</tissue>
    </source>
</reference>
<reference key="2">
    <citation type="journal article" date="2007" name="BMC Genomics">
        <title>The full-ORF clone resource of the German cDNA consortium.</title>
        <authorList>
            <person name="Bechtel S."/>
            <person name="Rosenfelder H."/>
            <person name="Duda A."/>
            <person name="Schmidt C.P."/>
            <person name="Ernst U."/>
            <person name="Wellenreuther R."/>
            <person name="Mehrle A."/>
            <person name="Schuster C."/>
            <person name="Bahr A."/>
            <person name="Bloecker H."/>
            <person name="Heubner D."/>
            <person name="Hoerlein A."/>
            <person name="Michel G."/>
            <person name="Wedler H."/>
            <person name="Koehrer K."/>
            <person name="Ottenwaelder B."/>
            <person name="Poustka A."/>
            <person name="Wiemann S."/>
            <person name="Schupp I."/>
        </authorList>
    </citation>
    <scope>NUCLEOTIDE SEQUENCE [LARGE SCALE MRNA] (ISOFORM 2)</scope>
    <source>
        <tissue>Testis</tissue>
    </source>
</reference>
<reference key="3">
    <citation type="journal article" date="2006" name="Nature">
        <title>Analysis of the DNA sequence and duplication history of human chromosome 15.</title>
        <authorList>
            <person name="Zody M.C."/>
            <person name="Garber M."/>
            <person name="Sharpe T."/>
            <person name="Young S.K."/>
            <person name="Rowen L."/>
            <person name="O'Neill K."/>
            <person name="Whittaker C.A."/>
            <person name="Kamal M."/>
            <person name="Chang J.L."/>
            <person name="Cuomo C.A."/>
            <person name="Dewar K."/>
            <person name="FitzGerald M.G."/>
            <person name="Kodira C.D."/>
            <person name="Madan A."/>
            <person name="Qin S."/>
            <person name="Yang X."/>
            <person name="Abbasi N."/>
            <person name="Abouelleil A."/>
            <person name="Arachchi H.M."/>
            <person name="Baradarani L."/>
            <person name="Birditt B."/>
            <person name="Bloom S."/>
            <person name="Bloom T."/>
            <person name="Borowsky M.L."/>
            <person name="Burke J."/>
            <person name="Butler J."/>
            <person name="Cook A."/>
            <person name="DeArellano K."/>
            <person name="DeCaprio D."/>
            <person name="Dorris L. III"/>
            <person name="Dors M."/>
            <person name="Eichler E.E."/>
            <person name="Engels R."/>
            <person name="Fahey J."/>
            <person name="Fleetwood P."/>
            <person name="Friedman C."/>
            <person name="Gearin G."/>
            <person name="Hall J.L."/>
            <person name="Hensley G."/>
            <person name="Johnson E."/>
            <person name="Jones C."/>
            <person name="Kamat A."/>
            <person name="Kaur A."/>
            <person name="Locke D.P."/>
            <person name="Madan A."/>
            <person name="Munson G."/>
            <person name="Jaffe D.B."/>
            <person name="Lui A."/>
            <person name="Macdonald P."/>
            <person name="Mauceli E."/>
            <person name="Naylor J.W."/>
            <person name="Nesbitt R."/>
            <person name="Nicol R."/>
            <person name="O'Leary S.B."/>
            <person name="Ratcliffe A."/>
            <person name="Rounsley S."/>
            <person name="She X."/>
            <person name="Sneddon K.M.B."/>
            <person name="Stewart S."/>
            <person name="Sougnez C."/>
            <person name="Stone S.M."/>
            <person name="Topham K."/>
            <person name="Vincent D."/>
            <person name="Wang S."/>
            <person name="Zimmer A.R."/>
            <person name="Birren B.W."/>
            <person name="Hood L."/>
            <person name="Lander E.S."/>
            <person name="Nusbaum C."/>
        </authorList>
    </citation>
    <scope>NUCLEOTIDE SEQUENCE [LARGE SCALE GENOMIC DNA]</scope>
</reference>
<reference key="4">
    <citation type="submission" date="2005-09" db="EMBL/GenBank/DDBJ databases">
        <authorList>
            <person name="Mural R.J."/>
            <person name="Istrail S."/>
            <person name="Sutton G.G."/>
            <person name="Florea L."/>
            <person name="Halpern A.L."/>
            <person name="Mobarry C.M."/>
            <person name="Lippert R."/>
            <person name="Walenz B."/>
            <person name="Shatkay H."/>
            <person name="Dew I."/>
            <person name="Miller J.R."/>
            <person name="Flanigan M.J."/>
            <person name="Edwards N.J."/>
            <person name="Bolanos R."/>
            <person name="Fasulo D."/>
            <person name="Halldorsson B.V."/>
            <person name="Hannenhalli S."/>
            <person name="Turner R."/>
            <person name="Yooseph S."/>
            <person name="Lu F."/>
            <person name="Nusskern D.R."/>
            <person name="Shue B.C."/>
            <person name="Zheng X.H."/>
            <person name="Zhong F."/>
            <person name="Delcher A.L."/>
            <person name="Huson D.H."/>
            <person name="Kravitz S.A."/>
            <person name="Mouchard L."/>
            <person name="Reinert K."/>
            <person name="Remington K.A."/>
            <person name="Clark A.G."/>
            <person name="Waterman M.S."/>
            <person name="Eichler E.E."/>
            <person name="Adams M.D."/>
            <person name="Hunkapiller M.W."/>
            <person name="Myers E.W."/>
            <person name="Venter J.C."/>
        </authorList>
    </citation>
    <scope>NUCLEOTIDE SEQUENCE [LARGE SCALE GENOMIC DNA]</scope>
</reference>
<reference key="5">
    <citation type="journal article" date="2004" name="Genome Res.">
        <title>The status, quality, and expansion of the NIH full-length cDNA project: the Mammalian Gene Collection (MGC).</title>
        <authorList>
            <consortium name="The MGC Project Team"/>
        </authorList>
    </citation>
    <scope>NUCLEOTIDE SEQUENCE [LARGE SCALE MRNA] (ISOFORMS 2 AND 3)</scope>
    <source>
        <tissue>Blood</tissue>
        <tissue>Brain</tissue>
    </source>
</reference>
<reference key="6">
    <citation type="submission" date="2000-07" db="EMBL/GenBank/DDBJ databases">
        <authorList>
            <consortium name="The European IMAGE consortium"/>
        </authorList>
    </citation>
    <scope>NUCLEOTIDE SEQUENCE [LARGE SCALE MRNA] OF 162-472 (ISOFORM 2)</scope>
</reference>
<reference key="7">
    <citation type="journal article" date="2008" name="Mol. Cell">
        <title>Kinase-selective enrichment enables quantitative phosphoproteomics of the kinome across the cell cycle.</title>
        <authorList>
            <person name="Daub H."/>
            <person name="Olsen J.V."/>
            <person name="Bairlein M."/>
            <person name="Gnad F."/>
            <person name="Oppermann F.S."/>
            <person name="Korner R."/>
            <person name="Greff Z."/>
            <person name="Keri G."/>
            <person name="Stemmann O."/>
            <person name="Mann M."/>
        </authorList>
    </citation>
    <scope>PHOSPHORYLATION [LARGE SCALE ANALYSIS] AT SER-176</scope>
    <scope>IDENTIFICATION BY MASS SPECTROMETRY [LARGE SCALE ANALYSIS]</scope>
    <source>
        <tissue>Cervix carcinoma</tissue>
    </source>
</reference>
<reference key="8">
    <citation type="journal article" date="2009" name="Genes Dev.">
        <title>Autophagy mediates the mitotic senescence transition.</title>
        <authorList>
            <person name="Young A.R."/>
            <person name="Narita M."/>
            <person name="Ferreira M."/>
            <person name="Kirschner K."/>
            <person name="Sadaie M."/>
            <person name="Darot J.F."/>
            <person name="Tavare S."/>
            <person name="Arakawa S."/>
            <person name="Shimizu S."/>
            <person name="Watt F.M."/>
            <person name="Narita M."/>
        </authorList>
    </citation>
    <scope>FUNCTION</scope>
    <scope>SUBCELLULAR LOCATION</scope>
    <scope>INDUCTION</scope>
</reference>
<reference key="9">
    <citation type="journal article" date="2010" name="Exp. Cell Res.">
        <title>Identification of a novel serine/threonine kinase ULK3 as a positive regulator of Hedgehog pathway.</title>
        <authorList>
            <person name="Maloverjan A."/>
            <person name="Piirsoo M."/>
            <person name="Michelson P."/>
            <person name="Kogerman P."/>
            <person name="Osterlund T."/>
        </authorList>
    </citation>
    <scope>FUNCTION</scope>
    <scope>SUBCELLULAR LOCATION</scope>
    <scope>TISSUE SPECIFICITY</scope>
    <scope>AUTOPHOSPHORYLATION</scope>
    <scope>MUTAGENESIS OF LYS-44 AND LYS-139</scope>
</reference>
<reference key="10">
    <citation type="journal article" date="2010" name="J. Biol. Chem.">
        <title>Dual function of UNC-51-like kinase 3 (Ulk3) in the Sonic hedgehog signaling pathway.</title>
        <authorList>
            <person name="Maloverjan A."/>
            <person name="Piirsoo M."/>
            <person name="Kasak L."/>
            <person name="Peil L."/>
            <person name="Osterlund T."/>
            <person name="Kogerman P."/>
        </authorList>
    </citation>
    <scope>FUNCTION</scope>
    <scope>AUTOPHOSPHORYLATION</scope>
    <scope>INTERACTION WITH SUFU</scope>
    <scope>MUTAGENESIS OF LYS-139</scope>
    <scope>PHOSPHORYLATION AT SER-300; SER-350; SER-384 AND SER-464</scope>
</reference>
<reference key="11">
    <citation type="journal article" date="2011" name="BMC Syst. Biol.">
        <title>Initial characterization of the human central proteome.</title>
        <authorList>
            <person name="Burkard T.R."/>
            <person name="Planyavsky M."/>
            <person name="Kaupe I."/>
            <person name="Breitwieser F.P."/>
            <person name="Buerckstuemmer T."/>
            <person name="Bennett K.L."/>
            <person name="Superti-Furga G."/>
            <person name="Colinge J."/>
        </authorList>
    </citation>
    <scope>IDENTIFICATION BY MASS SPECTROMETRY [LARGE SCALE ANALYSIS]</scope>
</reference>
<protein>
    <recommendedName>
        <fullName>Serine/threonine-protein kinase ULK3</fullName>
        <ecNumber>2.7.11.1</ecNumber>
    </recommendedName>
    <alternativeName>
        <fullName>Unc-51-like kinase 3</fullName>
    </alternativeName>
</protein>
<accession>Q6PHR2</accession>
<accession>B2RXK3</accession>
<accession>B4DFT0</accession>
<accession>B4DRQ7</accession>
<accession>D3DW68</accession>
<accession>Q9NPN5</accession>
<accession>Q9UFS4</accession>
<keyword id="KW-0002">3D-structure</keyword>
<keyword id="KW-0025">Alternative splicing</keyword>
<keyword id="KW-0067">ATP-binding</keyword>
<keyword id="KW-0072">Autophagy</keyword>
<keyword id="KW-0963">Cytoplasm</keyword>
<keyword id="KW-0418">Kinase</keyword>
<keyword id="KW-0547">Nucleotide-binding</keyword>
<keyword id="KW-0597">Phosphoprotein</keyword>
<keyword id="KW-1267">Proteomics identification</keyword>
<keyword id="KW-1185">Reference proteome</keyword>
<keyword id="KW-0677">Repeat</keyword>
<keyword id="KW-0723">Serine/threonine-protein kinase</keyword>
<keyword id="KW-0808">Transferase</keyword>
<proteinExistence type="evidence at protein level"/>
<organism>
    <name type="scientific">Homo sapiens</name>
    <name type="common">Human</name>
    <dbReference type="NCBI Taxonomy" id="9606"/>
    <lineage>
        <taxon>Eukaryota</taxon>
        <taxon>Metazoa</taxon>
        <taxon>Chordata</taxon>
        <taxon>Craniata</taxon>
        <taxon>Vertebrata</taxon>
        <taxon>Euteleostomi</taxon>
        <taxon>Mammalia</taxon>
        <taxon>Eutheria</taxon>
        <taxon>Euarchontoglires</taxon>
        <taxon>Primates</taxon>
        <taxon>Haplorrhini</taxon>
        <taxon>Catarrhini</taxon>
        <taxon>Hominidae</taxon>
        <taxon>Homo</taxon>
    </lineage>
</organism>
<feature type="chain" id="PRO_0000250150" description="Serine/threonine-protein kinase ULK3">
    <location>
        <begin position="1"/>
        <end position="472"/>
    </location>
</feature>
<feature type="domain" description="Protein kinase" evidence="1">
    <location>
        <begin position="14"/>
        <end position="270"/>
    </location>
</feature>
<feature type="domain" description="MIT 1">
    <location>
        <begin position="280"/>
        <end position="348"/>
    </location>
</feature>
<feature type="domain" description="MIT 2">
    <location>
        <begin position="375"/>
        <end position="444"/>
    </location>
</feature>
<feature type="active site" description="Proton acceptor" evidence="1 2">
    <location>
        <position position="137"/>
    </location>
</feature>
<feature type="binding site" evidence="1">
    <location>
        <begin position="20"/>
        <end position="28"/>
    </location>
    <ligand>
        <name>ATP</name>
        <dbReference type="ChEBI" id="CHEBI:30616"/>
    </ligand>
</feature>
<feature type="binding site" evidence="1">
    <location>
        <position position="44"/>
    </location>
    <ligand>
        <name>ATP</name>
        <dbReference type="ChEBI" id="CHEBI:30616"/>
    </ligand>
</feature>
<feature type="modified residue" description="Phosphoserine" evidence="11">
    <location>
        <position position="176"/>
    </location>
</feature>
<feature type="modified residue" description="Phosphoserine; by autocatalysis" evidence="5">
    <location>
        <position position="300"/>
    </location>
</feature>
<feature type="modified residue" description="Phosphoserine; by autocatalysis" evidence="5">
    <location>
        <position position="350"/>
    </location>
</feature>
<feature type="modified residue" description="Phosphoserine; by autocatalysis" evidence="5">
    <location>
        <position position="384"/>
    </location>
</feature>
<feature type="modified residue" description="Phosphoserine; by autocatalysis" evidence="5">
    <location>
        <position position="464"/>
    </location>
</feature>
<feature type="splice variant" id="VSP_057411" description="In isoform 4." evidence="6">
    <original>MAGPGWGPPRLDGFILTERLGSGTYATVYKAYAK</original>
    <variation>MQRNGSASRGLEKTRLRLCREARIPESAFLTGLTRESWEARCWCA</variation>
    <location>
        <begin position="1"/>
        <end position="34"/>
    </location>
</feature>
<feature type="splice variant" id="VSP_038147" description="In isoform 2." evidence="7 8 9">
    <original>EALFGQPPFA</original>
    <variation>GETSFPCFSP</variation>
    <location>
        <begin position="205"/>
        <end position="214"/>
    </location>
</feature>
<feature type="splice variant" id="VSP_038148" description="In isoform 2." evidence="7 8 9">
    <location>
        <begin position="215"/>
        <end position="472"/>
    </location>
</feature>
<feature type="splice variant" id="VSP_039925" description="In isoform 3." evidence="7">
    <location>
        <begin position="444"/>
        <end position="445"/>
    </location>
</feature>
<feature type="sequence variant" id="VAR_057113" description="In dbSNP:rs34945944.">
    <original>R</original>
    <variation>H</variation>
    <location>
        <position position="101"/>
    </location>
</feature>
<feature type="sequence variant" id="VAR_059771" description="In dbSNP:rs12898397.">
    <original>K</original>
    <variation>R</variation>
    <location>
        <position position="445"/>
    </location>
</feature>
<feature type="mutagenesis site" description="Decreased kinase activity." evidence="4">
    <original>K</original>
    <variation>R</variation>
    <location>
        <position position="44"/>
    </location>
</feature>
<feature type="mutagenesis site" description="Loss of kinase activity. Does not promote GLI1 nuclear localization." evidence="4 5">
    <original>K</original>
    <variation>R</variation>
    <location>
        <position position="139"/>
    </location>
</feature>
<feature type="sequence conflict" description="In Ref. 1; BAG61369." evidence="10" ref="1">
    <original>A</original>
    <variation>S</variation>
    <location>
        <position position="47"/>
    </location>
</feature>
<feature type="strand" evidence="13">
    <location>
        <begin position="13"/>
        <end position="19"/>
    </location>
</feature>
<feature type="strand" evidence="13">
    <location>
        <begin position="28"/>
        <end position="33"/>
    </location>
</feature>
<feature type="strand" evidence="13">
    <location>
        <begin position="36"/>
        <end position="47"/>
    </location>
</feature>
<feature type="helix" evidence="13">
    <location>
        <begin position="48"/>
        <end position="50"/>
    </location>
</feature>
<feature type="helix" evidence="13">
    <location>
        <begin position="53"/>
        <end position="67"/>
    </location>
</feature>
<feature type="strand" evidence="13">
    <location>
        <begin position="77"/>
        <end position="82"/>
    </location>
</feature>
<feature type="strand" evidence="13">
    <location>
        <begin position="84"/>
        <end position="92"/>
    </location>
</feature>
<feature type="helix" evidence="13">
    <location>
        <begin position="99"/>
        <end position="106"/>
    </location>
</feature>
<feature type="helix" evidence="13">
    <location>
        <begin position="111"/>
        <end position="130"/>
    </location>
</feature>
<feature type="helix" evidence="13">
    <location>
        <begin position="140"/>
        <end position="142"/>
    </location>
</feature>
<feature type="strand" evidence="13">
    <location>
        <begin position="143"/>
        <end position="150"/>
    </location>
</feature>
<feature type="strand" evidence="13">
    <location>
        <begin position="153"/>
        <end position="155"/>
    </location>
</feature>
<feature type="turn" evidence="13">
    <location>
        <begin position="177"/>
        <end position="179"/>
    </location>
</feature>
<feature type="helix" evidence="13">
    <location>
        <begin position="182"/>
        <end position="186"/>
    </location>
</feature>
<feature type="helix" evidence="13">
    <location>
        <begin position="194"/>
        <end position="208"/>
    </location>
</feature>
<feature type="helix" evidence="13">
    <location>
        <begin position="218"/>
        <end position="226"/>
    </location>
</feature>
<feature type="strand" evidence="14">
    <location>
        <begin position="235"/>
        <end position="237"/>
    </location>
</feature>
<feature type="helix" evidence="13">
    <location>
        <begin position="241"/>
        <end position="250"/>
    </location>
</feature>
<feature type="turn" evidence="13">
    <location>
        <begin position="255"/>
        <end position="257"/>
    </location>
</feature>
<feature type="helix" evidence="13">
    <location>
        <begin position="261"/>
        <end position="265"/>
    </location>
</feature>
<feature type="turn" evidence="13">
    <location>
        <begin position="268"/>
        <end position="270"/>
    </location>
</feature>
<feature type="helix" evidence="12">
    <location>
        <begin position="362"/>
        <end position="369"/>
    </location>
</feature>
<feature type="turn" evidence="12">
    <location>
        <begin position="370"/>
        <end position="372"/>
    </location>
</feature>
<feature type="helix" evidence="12">
    <location>
        <begin position="374"/>
        <end position="390"/>
    </location>
</feature>
<feature type="helix" evidence="12">
    <location>
        <begin position="396"/>
        <end position="416"/>
    </location>
</feature>
<feature type="helix" evidence="12">
    <location>
        <begin position="421"/>
        <end position="445"/>
    </location>
</feature>
<comment type="function">
    <text evidence="3 4 5">Serine/threonine protein kinase that acts as a regulator of Sonic hedgehog (SHH) signaling and autophagy. Acts as a negative regulator of SHH signaling in the absence of SHH ligand: interacts with SUFU, thereby inactivating the protein kinase activity and preventing phosphorylation of GLI proteins (GLI1, GLI2 and/or GLI3). Positively regulates SHH signaling in the presence of SHH: dissociates from SUFU, autophosphorylates and mediates phosphorylation of GLI2, activating it and promoting its nuclear translocation. Phosphorylates in vitro GLI2, as well as GLI1 and GLI3, although less efficiently. Also acts as a regulator of autophagy: following cellular senescence, able to induce autophagy.</text>
</comment>
<comment type="catalytic activity">
    <reaction>
        <text>L-seryl-[protein] + ATP = O-phospho-L-seryl-[protein] + ADP + H(+)</text>
        <dbReference type="Rhea" id="RHEA:17989"/>
        <dbReference type="Rhea" id="RHEA-COMP:9863"/>
        <dbReference type="Rhea" id="RHEA-COMP:11604"/>
        <dbReference type="ChEBI" id="CHEBI:15378"/>
        <dbReference type="ChEBI" id="CHEBI:29999"/>
        <dbReference type="ChEBI" id="CHEBI:30616"/>
        <dbReference type="ChEBI" id="CHEBI:83421"/>
        <dbReference type="ChEBI" id="CHEBI:456216"/>
        <dbReference type="EC" id="2.7.11.1"/>
    </reaction>
</comment>
<comment type="catalytic activity">
    <reaction>
        <text>L-threonyl-[protein] + ATP = O-phospho-L-threonyl-[protein] + ADP + H(+)</text>
        <dbReference type="Rhea" id="RHEA:46608"/>
        <dbReference type="Rhea" id="RHEA-COMP:11060"/>
        <dbReference type="Rhea" id="RHEA-COMP:11605"/>
        <dbReference type="ChEBI" id="CHEBI:15378"/>
        <dbReference type="ChEBI" id="CHEBI:30013"/>
        <dbReference type="ChEBI" id="CHEBI:30616"/>
        <dbReference type="ChEBI" id="CHEBI:61977"/>
        <dbReference type="ChEBI" id="CHEBI:456216"/>
        <dbReference type="EC" id="2.7.11.1"/>
    </reaction>
</comment>
<comment type="subunit">
    <text evidence="5">Interacts (via protein kinase domain) with SUFU.</text>
</comment>
<comment type="interaction">
    <interactant intactId="EBI-1383475">
        <id>Q6PHR2</id>
    </interactant>
    <interactant intactId="EBI-295634">
        <id>Q16543</id>
        <label>CDC37</label>
    </interactant>
    <organismsDiffer>false</organismsDiffer>
    <experiments>2</experiments>
</comment>
<comment type="interaction">
    <interactant intactId="EBI-1383475">
        <id>Q6PHR2</id>
    </interactant>
    <interactant intactId="EBI-306914">
        <id>Q13451</id>
        <label>FKBP5</label>
    </interactant>
    <organismsDiffer>false</organismsDiffer>
    <experiments>3</experiments>
</comment>
<comment type="subcellular location">
    <subcellularLocation>
        <location evidence="3 4">Cytoplasm</location>
    </subcellularLocation>
    <text>Localizes to pre-autophagosomal structure during cellular senescence.</text>
</comment>
<comment type="alternative products">
    <event type="alternative splicing"/>
    <isoform>
        <id>Q6PHR2-1</id>
        <name>1</name>
        <sequence type="displayed"/>
    </isoform>
    <isoform>
        <id>Q6PHR2-2</id>
        <name>2</name>
        <sequence type="described" ref="VSP_038147 VSP_038148"/>
    </isoform>
    <isoform>
        <id>Q6PHR2-3</id>
        <name>3</name>
        <sequence type="described" ref="VSP_039925"/>
    </isoform>
    <isoform>
        <id>Q6PHR2-4</id>
        <name>4</name>
        <sequence type="described" ref="VSP_057411"/>
    </isoform>
</comment>
<comment type="tissue specificity">
    <text evidence="4">Widely expressed. Highest levels observed in fetal brain. In adult tissues, high levels in brain, liver and kidney, moderate levels in testis and adrenal gland and low levels in heart, lung, stomach, thymus, prostate and placenta. In the brain, highest expression in the hippocampus, high levels also detected in the cerebellum, olfactory bulb and optic nerve. In the central nervous system, lowest levels in the spinal cord.</text>
</comment>
<comment type="induction">
    <text evidence="3">Up-regulated during senescence.</text>
</comment>
<comment type="PTM">
    <text evidence="5">Autophosphorylated. Autophosphorylation is blocked by interaction with SUFU.</text>
</comment>
<comment type="miscellaneous">
    <molecule>Isoform 2</molecule>
    <text evidence="10">May be produced at very low levels due to a premature stop codon in the mRNA, leading to nonsense-mediated mRNA decay.</text>
</comment>
<comment type="miscellaneous">
    <molecule>Isoform 3</molecule>
    <text evidence="10">May be due to competing donor splice site.</text>
</comment>
<comment type="similarity">
    <text evidence="1">Belongs to the protein kinase superfamily. Ser/Thr protein kinase family. APG1/unc-51/ULK1 subfamily.</text>
</comment>
<comment type="sequence caution" evidence="10">
    <conflict type="erroneous initiation">
        <sequence resource="EMBL-CDS" id="CAB55955"/>
    </conflict>
    <text>Extended N-terminus.</text>
</comment>
<dbReference type="EC" id="2.7.11.1"/>
<dbReference type="EMBL" id="AK294245">
    <property type="protein sequence ID" value="BAG57541.1"/>
    <property type="molecule type" value="mRNA"/>
</dbReference>
<dbReference type="EMBL" id="AK299380">
    <property type="protein sequence ID" value="BAG61369.1"/>
    <property type="molecule type" value="mRNA"/>
</dbReference>
<dbReference type="EMBL" id="AL117482">
    <property type="protein sequence ID" value="CAB55955.2"/>
    <property type="status" value="ALT_INIT"/>
    <property type="molecule type" value="mRNA"/>
</dbReference>
<dbReference type="EMBL" id="AC091230">
    <property type="status" value="NOT_ANNOTATED_CDS"/>
    <property type="molecule type" value="Genomic_DNA"/>
</dbReference>
<dbReference type="EMBL" id="BC036117">
    <property type="status" value="NOT_ANNOTATED_CDS"/>
    <property type="molecule type" value="mRNA"/>
</dbReference>
<dbReference type="EMBL" id="BC056423">
    <property type="status" value="NOT_ANNOTATED_CDS"/>
    <property type="molecule type" value="mRNA"/>
</dbReference>
<dbReference type="EMBL" id="CH471136">
    <property type="protein sequence ID" value="EAW99301.1"/>
    <property type="molecule type" value="Genomic_DNA"/>
</dbReference>
<dbReference type="EMBL" id="CH471136">
    <property type="protein sequence ID" value="EAW99303.1"/>
    <property type="molecule type" value="Genomic_DNA"/>
</dbReference>
<dbReference type="EMBL" id="BC157884">
    <property type="protein sequence ID" value="AAI57885.1"/>
    <property type="molecule type" value="mRNA"/>
</dbReference>
<dbReference type="EMBL" id="AL360256">
    <property type="protein sequence ID" value="CAB96176.1"/>
    <property type="molecule type" value="mRNA"/>
</dbReference>
<dbReference type="CCDS" id="CCDS45305.1">
    <molecule id="Q6PHR2-1"/>
</dbReference>
<dbReference type="CCDS" id="CCDS76779.1">
    <molecule id="Q6PHR2-3"/>
</dbReference>
<dbReference type="CCDS" id="CCDS92044.1">
    <molecule id="Q6PHR2-4"/>
</dbReference>
<dbReference type="PIR" id="T17265">
    <property type="entry name" value="T17265"/>
</dbReference>
<dbReference type="RefSeq" id="NP_001092906.3">
    <molecule id="Q6PHR2-1"/>
    <property type="nucleotide sequence ID" value="NM_001099436.4"/>
</dbReference>
<dbReference type="RefSeq" id="NP_001271293.2">
    <molecule id="Q6PHR2-3"/>
    <property type="nucleotide sequence ID" value="NM_001284364.3"/>
</dbReference>
<dbReference type="RefSeq" id="NP_001271294.1">
    <property type="nucleotide sequence ID" value="NM_001284365.2"/>
</dbReference>
<dbReference type="RefSeq" id="NP_001398011.1">
    <molecule id="Q6PHR2-4"/>
    <property type="nucleotide sequence ID" value="NM_001411082.1"/>
</dbReference>
<dbReference type="RefSeq" id="XP_005254346.1">
    <molecule id="Q6PHR2-4"/>
    <property type="nucleotide sequence ID" value="XM_005254289.3"/>
</dbReference>
<dbReference type="PDB" id="4WZX">
    <property type="method" value="X-ray"/>
    <property type="resolution" value="1.39 A"/>
    <property type="chains" value="A=359-449"/>
</dbReference>
<dbReference type="PDB" id="6FDY">
    <property type="method" value="X-ray"/>
    <property type="resolution" value="1.70 A"/>
    <property type="chains" value="U=2-277"/>
</dbReference>
<dbReference type="PDB" id="6FDZ">
    <property type="method" value="X-ray"/>
    <property type="resolution" value="2.55 A"/>
    <property type="chains" value="U=2-277"/>
</dbReference>
<dbReference type="PDBsum" id="4WZX"/>
<dbReference type="PDBsum" id="6FDY"/>
<dbReference type="PDBsum" id="6FDZ"/>
<dbReference type="SMR" id="Q6PHR2"/>
<dbReference type="BioGRID" id="117470">
    <property type="interactions" value="62"/>
</dbReference>
<dbReference type="FunCoup" id="Q6PHR2">
    <property type="interactions" value="1641"/>
</dbReference>
<dbReference type="IntAct" id="Q6PHR2">
    <property type="interactions" value="47"/>
</dbReference>
<dbReference type="MINT" id="Q6PHR2"/>
<dbReference type="STRING" id="9606.ENSP00000400312"/>
<dbReference type="BindingDB" id="Q6PHR2"/>
<dbReference type="ChEMBL" id="CHEMBL5047"/>
<dbReference type="DrugBank" id="DB12010">
    <property type="generic name" value="Fostamatinib"/>
</dbReference>
<dbReference type="DrugCentral" id="Q6PHR2"/>
<dbReference type="iPTMnet" id="Q6PHR2"/>
<dbReference type="PhosphoSitePlus" id="Q6PHR2"/>
<dbReference type="BioMuta" id="ULK3"/>
<dbReference type="DMDM" id="259016166"/>
<dbReference type="jPOST" id="Q6PHR2"/>
<dbReference type="MassIVE" id="Q6PHR2"/>
<dbReference type="PaxDb" id="9606-ENSP00000400312"/>
<dbReference type="PeptideAtlas" id="Q6PHR2"/>
<dbReference type="ProteomicsDB" id="4075"/>
<dbReference type="ProteomicsDB" id="67125">
    <molecule id="Q6PHR2-1"/>
</dbReference>
<dbReference type="ProteomicsDB" id="67126">
    <molecule id="Q6PHR2-2"/>
</dbReference>
<dbReference type="ProteomicsDB" id="67127">
    <molecule id="Q6PHR2-3"/>
</dbReference>
<dbReference type="Pumba" id="Q6PHR2"/>
<dbReference type="Antibodypedia" id="27077">
    <property type="antibodies" value="390 antibodies from 33 providers"/>
</dbReference>
<dbReference type="DNASU" id="25989"/>
<dbReference type="Ensembl" id="ENST00000440863.7">
    <molecule id="Q6PHR2-1"/>
    <property type="protein sequence ID" value="ENSP00000400312.2"/>
    <property type="gene ID" value="ENSG00000140474.14"/>
</dbReference>
<dbReference type="Ensembl" id="ENST00000568667.5">
    <molecule id="Q6PHR2-4"/>
    <property type="protein sequence ID" value="ENSP00000457853.1"/>
    <property type="gene ID" value="ENSG00000140474.14"/>
</dbReference>
<dbReference type="Ensembl" id="ENST00000569437.5">
    <molecule id="Q6PHR2-3"/>
    <property type="protein sequence ID" value="ENSP00000456051.1"/>
    <property type="gene ID" value="ENSG00000140474.14"/>
</dbReference>
<dbReference type="GeneID" id="25989"/>
<dbReference type="KEGG" id="hsa:25989"/>
<dbReference type="MANE-Select" id="ENST00000440863.7">
    <property type="protein sequence ID" value="ENSP00000400312.2"/>
    <property type="RefSeq nucleotide sequence ID" value="NM_001099436.4"/>
    <property type="RefSeq protein sequence ID" value="NP_001092906.3"/>
</dbReference>
<dbReference type="UCSC" id="uc010ulq.3">
    <property type="organism name" value="human"/>
</dbReference>
<dbReference type="UCSC" id="uc059llp.1">
    <molecule id="Q6PHR2-1"/>
    <property type="organism name" value="human"/>
</dbReference>
<dbReference type="AGR" id="HGNC:19703"/>
<dbReference type="CTD" id="25989"/>
<dbReference type="DisGeNET" id="25989"/>
<dbReference type="GeneCards" id="ULK3"/>
<dbReference type="HGNC" id="HGNC:19703">
    <property type="gene designation" value="ULK3"/>
</dbReference>
<dbReference type="HPA" id="ENSG00000140474">
    <property type="expression patterns" value="Low tissue specificity"/>
</dbReference>
<dbReference type="MIM" id="613472">
    <property type="type" value="gene"/>
</dbReference>
<dbReference type="neXtProt" id="NX_Q6PHR2"/>
<dbReference type="OpenTargets" id="ENSG00000140474"/>
<dbReference type="PharmGKB" id="PA134908392"/>
<dbReference type="VEuPathDB" id="HostDB:ENSG00000140474"/>
<dbReference type="eggNOG" id="KOG0595">
    <property type="taxonomic scope" value="Eukaryota"/>
</dbReference>
<dbReference type="GeneTree" id="ENSGT00940000157689"/>
<dbReference type="HOGENOM" id="CLU_000288_63_58_1"/>
<dbReference type="InParanoid" id="Q6PHR2"/>
<dbReference type="OMA" id="TQAVEHD"/>
<dbReference type="OrthoDB" id="346907at2759"/>
<dbReference type="PAN-GO" id="Q6PHR2">
    <property type="GO annotations" value="6 GO annotations based on evolutionary models"/>
</dbReference>
<dbReference type="PhylomeDB" id="Q6PHR2"/>
<dbReference type="TreeFam" id="TF324551"/>
<dbReference type="BRENDA" id="2.7.11.1">
    <property type="organism ID" value="2681"/>
</dbReference>
<dbReference type="PathwayCommons" id="Q6PHR2"/>
<dbReference type="Reactome" id="R-HSA-5632684">
    <property type="pathway name" value="Hedgehog 'on' state"/>
</dbReference>
<dbReference type="SignaLink" id="Q6PHR2"/>
<dbReference type="SIGNOR" id="Q6PHR2"/>
<dbReference type="BioGRID-ORCS" id="25989">
    <property type="hits" value="6 hits in 726 CRISPR screens"/>
</dbReference>
<dbReference type="EvolutionaryTrace" id="Q6PHR2"/>
<dbReference type="GenomeRNAi" id="25989"/>
<dbReference type="Pharos" id="Q6PHR2">
    <property type="development level" value="Tchem"/>
</dbReference>
<dbReference type="PRO" id="PR:Q6PHR2"/>
<dbReference type="Proteomes" id="UP000005640">
    <property type="component" value="Chromosome 15"/>
</dbReference>
<dbReference type="RNAct" id="Q6PHR2">
    <property type="molecule type" value="protein"/>
</dbReference>
<dbReference type="Bgee" id="ENSG00000140474">
    <property type="expression patterns" value="Expressed in right hemisphere of cerebellum and 170 other cell types or tissues"/>
</dbReference>
<dbReference type="ExpressionAtlas" id="Q6PHR2">
    <property type="expression patterns" value="baseline and differential"/>
</dbReference>
<dbReference type="GO" id="GO:0005776">
    <property type="term" value="C:autophagosome"/>
    <property type="evidence" value="ECO:0000318"/>
    <property type="project" value="GO_Central"/>
</dbReference>
<dbReference type="GO" id="GO:0097542">
    <property type="term" value="C:ciliary tip"/>
    <property type="evidence" value="ECO:0000304"/>
    <property type="project" value="Reactome"/>
</dbReference>
<dbReference type="GO" id="GO:0005737">
    <property type="term" value="C:cytoplasm"/>
    <property type="evidence" value="ECO:0000314"/>
    <property type="project" value="UniProtKB"/>
</dbReference>
<dbReference type="GO" id="GO:0005829">
    <property type="term" value="C:cytosol"/>
    <property type="evidence" value="ECO:0000318"/>
    <property type="project" value="GO_Central"/>
</dbReference>
<dbReference type="GO" id="GO:0000407">
    <property type="term" value="C:phagophore assembly site"/>
    <property type="evidence" value="ECO:0000318"/>
    <property type="project" value="GO_Central"/>
</dbReference>
<dbReference type="GO" id="GO:0034045">
    <property type="term" value="C:phagophore assembly site membrane"/>
    <property type="evidence" value="ECO:0000318"/>
    <property type="project" value="GO_Central"/>
</dbReference>
<dbReference type="GO" id="GO:0005524">
    <property type="term" value="F:ATP binding"/>
    <property type="evidence" value="ECO:0007669"/>
    <property type="project" value="UniProtKB-KW"/>
</dbReference>
<dbReference type="GO" id="GO:0106310">
    <property type="term" value="F:protein serine kinase activity"/>
    <property type="evidence" value="ECO:0007669"/>
    <property type="project" value="RHEA"/>
</dbReference>
<dbReference type="GO" id="GO:0004674">
    <property type="term" value="F:protein serine/threonine kinase activity"/>
    <property type="evidence" value="ECO:0000314"/>
    <property type="project" value="UniProtKB"/>
</dbReference>
<dbReference type="GO" id="GO:0000045">
    <property type="term" value="P:autophagosome assembly"/>
    <property type="evidence" value="ECO:0000318"/>
    <property type="project" value="GO_Central"/>
</dbReference>
<dbReference type="GO" id="GO:0006914">
    <property type="term" value="P:autophagy"/>
    <property type="evidence" value="ECO:0000304"/>
    <property type="project" value="UniProtKB"/>
</dbReference>
<dbReference type="GO" id="GO:0090398">
    <property type="term" value="P:cellular senescence"/>
    <property type="evidence" value="ECO:0000304"/>
    <property type="project" value="UniProtKB"/>
</dbReference>
<dbReference type="GO" id="GO:0072537">
    <property type="term" value="P:fibroblast activation"/>
    <property type="evidence" value="ECO:0000315"/>
    <property type="project" value="CACAO"/>
</dbReference>
<dbReference type="GO" id="GO:0000423">
    <property type="term" value="P:mitophagy"/>
    <property type="evidence" value="ECO:0000318"/>
    <property type="project" value="GO_Central"/>
</dbReference>
<dbReference type="GO" id="GO:0045879">
    <property type="term" value="P:negative regulation of smoothened signaling pathway"/>
    <property type="evidence" value="ECO:0000314"/>
    <property type="project" value="UniProtKB"/>
</dbReference>
<dbReference type="GO" id="GO:0034727">
    <property type="term" value="P:piecemeal microautophagy of the nucleus"/>
    <property type="evidence" value="ECO:0000318"/>
    <property type="project" value="GO_Central"/>
</dbReference>
<dbReference type="GO" id="GO:0045880">
    <property type="term" value="P:positive regulation of smoothened signaling pathway"/>
    <property type="evidence" value="ECO:0000314"/>
    <property type="project" value="UniProtKB"/>
</dbReference>
<dbReference type="GO" id="GO:0046777">
    <property type="term" value="P:protein autophosphorylation"/>
    <property type="evidence" value="ECO:0000314"/>
    <property type="project" value="UniProtKB"/>
</dbReference>
<dbReference type="GO" id="GO:0010506">
    <property type="term" value="P:regulation of autophagy"/>
    <property type="evidence" value="ECO:0000318"/>
    <property type="project" value="GO_Central"/>
</dbReference>
<dbReference type="GO" id="GO:0042594">
    <property type="term" value="P:response to starvation"/>
    <property type="evidence" value="ECO:0000318"/>
    <property type="project" value="GO_Central"/>
</dbReference>
<dbReference type="GO" id="GO:0061709">
    <property type="term" value="P:reticulophagy"/>
    <property type="evidence" value="ECO:0000318"/>
    <property type="project" value="GO_Central"/>
</dbReference>
<dbReference type="GO" id="GO:0007224">
    <property type="term" value="P:smoothened signaling pathway"/>
    <property type="evidence" value="ECO:0000314"/>
    <property type="project" value="FlyBase"/>
</dbReference>
<dbReference type="CDD" id="cd02684">
    <property type="entry name" value="MIT_2"/>
    <property type="match status" value="1"/>
</dbReference>
<dbReference type="CDD" id="cd14121">
    <property type="entry name" value="STKc_ULK3"/>
    <property type="match status" value="1"/>
</dbReference>
<dbReference type="FunFam" id="1.10.510.10:FF:000241">
    <property type="entry name" value="Putative serine/threonine-protein kinase ULK3"/>
    <property type="match status" value="1"/>
</dbReference>
<dbReference type="FunFam" id="3.30.200.20:FF:000238">
    <property type="entry name" value="Putative serine/threonine-protein kinase ULK3"/>
    <property type="match status" value="1"/>
</dbReference>
<dbReference type="FunFam" id="1.20.58.80:FF:000008">
    <property type="entry name" value="serine/threonine-protein kinase ULK3 isoform X1"/>
    <property type="match status" value="1"/>
</dbReference>
<dbReference type="FunFam" id="1.20.58.80:FF:000010">
    <property type="entry name" value="serine/threonine-protein kinase ULK3 isoform X1"/>
    <property type="match status" value="1"/>
</dbReference>
<dbReference type="Gene3D" id="3.30.200.20">
    <property type="entry name" value="Phosphorylase Kinase, domain 1"/>
    <property type="match status" value="1"/>
</dbReference>
<dbReference type="Gene3D" id="1.20.58.80">
    <property type="entry name" value="Phosphotransferase system, lactose/cellobiose-type IIA subunit"/>
    <property type="match status" value="2"/>
</dbReference>
<dbReference type="Gene3D" id="1.10.510.10">
    <property type="entry name" value="Transferase(Phosphotransferase) domain 1"/>
    <property type="match status" value="1"/>
</dbReference>
<dbReference type="InterPro" id="IPR045269">
    <property type="entry name" value="Atg1-like"/>
</dbReference>
<dbReference type="InterPro" id="IPR011009">
    <property type="entry name" value="Kinase-like_dom_sf"/>
</dbReference>
<dbReference type="InterPro" id="IPR007330">
    <property type="entry name" value="MIT_dom"/>
</dbReference>
<dbReference type="InterPro" id="IPR036181">
    <property type="entry name" value="MIT_dom_sf"/>
</dbReference>
<dbReference type="InterPro" id="IPR000719">
    <property type="entry name" value="Prot_kinase_dom"/>
</dbReference>
<dbReference type="InterPro" id="IPR017441">
    <property type="entry name" value="Protein_kinase_ATP_BS"/>
</dbReference>
<dbReference type="InterPro" id="IPR008271">
    <property type="entry name" value="Ser/Thr_kinase_AS"/>
</dbReference>
<dbReference type="PANTHER" id="PTHR24348">
    <property type="entry name" value="SERINE/THREONINE-PROTEIN KINASE UNC-51-RELATED"/>
    <property type="match status" value="1"/>
</dbReference>
<dbReference type="PANTHER" id="PTHR24348:SF65">
    <property type="entry name" value="SERINE_THREONINE-PROTEIN KINASE ULK3"/>
    <property type="match status" value="1"/>
</dbReference>
<dbReference type="Pfam" id="PF04212">
    <property type="entry name" value="MIT"/>
    <property type="match status" value="2"/>
</dbReference>
<dbReference type="Pfam" id="PF00069">
    <property type="entry name" value="Pkinase"/>
    <property type="match status" value="1"/>
</dbReference>
<dbReference type="SMART" id="SM00745">
    <property type="entry name" value="MIT"/>
    <property type="match status" value="2"/>
</dbReference>
<dbReference type="SMART" id="SM00220">
    <property type="entry name" value="S_TKc"/>
    <property type="match status" value="1"/>
</dbReference>
<dbReference type="SUPFAM" id="SSF116846">
    <property type="entry name" value="MIT domain"/>
    <property type="match status" value="2"/>
</dbReference>
<dbReference type="SUPFAM" id="SSF56112">
    <property type="entry name" value="Protein kinase-like (PK-like)"/>
    <property type="match status" value="1"/>
</dbReference>
<dbReference type="PROSITE" id="PS00107">
    <property type="entry name" value="PROTEIN_KINASE_ATP"/>
    <property type="match status" value="1"/>
</dbReference>
<dbReference type="PROSITE" id="PS50011">
    <property type="entry name" value="PROTEIN_KINASE_DOM"/>
    <property type="match status" value="1"/>
</dbReference>
<dbReference type="PROSITE" id="PS00108">
    <property type="entry name" value="PROTEIN_KINASE_ST"/>
    <property type="match status" value="1"/>
</dbReference>
<gene>
    <name type="primary">ULK3</name>
</gene>